<keyword id="KW-0240">DNA-directed RNA polymerase</keyword>
<keyword id="KW-0548">Nucleotidyltransferase</keyword>
<keyword id="KW-1185">Reference proteome</keyword>
<keyword id="KW-0804">Transcription</keyword>
<keyword id="KW-0808">Transferase</keyword>
<proteinExistence type="inferred from homology"/>
<comment type="function">
    <text evidence="1">DNA-dependent RNA polymerase catalyzes the transcription of DNA into RNA using the four ribonucleoside triphosphates as substrates.</text>
</comment>
<comment type="catalytic activity">
    <reaction evidence="1">
        <text>RNA(n) + a ribonucleoside 5'-triphosphate = RNA(n+1) + diphosphate</text>
        <dbReference type="Rhea" id="RHEA:21248"/>
        <dbReference type="Rhea" id="RHEA-COMP:14527"/>
        <dbReference type="Rhea" id="RHEA-COMP:17342"/>
        <dbReference type="ChEBI" id="CHEBI:33019"/>
        <dbReference type="ChEBI" id="CHEBI:61557"/>
        <dbReference type="ChEBI" id="CHEBI:140395"/>
        <dbReference type="EC" id="2.7.7.6"/>
    </reaction>
</comment>
<comment type="subunit">
    <text evidence="1">Homodimer. The RNAP catalytic core consists of 2 alpha, 1 beta, 1 beta' and 1 omega subunit. When a sigma factor is associated with the core the holoenzyme is formed, which can initiate transcription.</text>
</comment>
<comment type="domain">
    <text evidence="1">The N-terminal domain is essential for RNAP assembly and basal transcription, whereas the C-terminal domain is involved in interaction with transcriptional regulators and with upstream promoter elements.</text>
</comment>
<comment type="similarity">
    <text evidence="1">Belongs to the RNA polymerase alpha chain family.</text>
</comment>
<name>RPOA_GLUOX</name>
<protein>
    <recommendedName>
        <fullName evidence="1">DNA-directed RNA polymerase subunit alpha</fullName>
        <shortName evidence="1">RNAP subunit alpha</shortName>
        <ecNumber evidence="1">2.7.7.6</ecNumber>
    </recommendedName>
    <alternativeName>
        <fullName evidence="1">RNA polymerase subunit alpha</fullName>
    </alternativeName>
    <alternativeName>
        <fullName evidence="1">Transcriptase subunit alpha</fullName>
    </alternativeName>
</protein>
<feature type="chain" id="PRO_0000225276" description="DNA-directed RNA polymerase subunit alpha">
    <location>
        <begin position="1"/>
        <end position="339"/>
    </location>
</feature>
<feature type="region of interest" description="Alpha N-terminal domain (alpha-NTD)" evidence="1">
    <location>
        <begin position="1"/>
        <end position="235"/>
    </location>
</feature>
<feature type="region of interest" description="Alpha C-terminal domain (alpha-CTD)" evidence="1">
    <location>
        <begin position="251"/>
        <end position="339"/>
    </location>
</feature>
<gene>
    <name evidence="1" type="primary">rpoA</name>
    <name type="ordered locus">GOX0356</name>
</gene>
<sequence>MVLQKNWQSLIKPEKLEVEPGPVASRIATVVAEPLERGFGMTLGNALRRILLSSLQGAAVTAIQIDGVLHEFSAVPGVREDVTDIVLNVKQLALRMHGEGPKRMILTATGPGEVTAGQIQAGHDIEIMNPDLVICTLDDGVKLGMEFTVNMGKGYVAAAANRPEDAPIGLIPIDAIYSPVRRVSYKIEQTRVGQVTDYDKLLLTVETNGAVTPEDSLALAARILQDQLQLFINFDEPRPVQHEEPQDDLPFNRNLLRKVDELELSVRSANCLKNDNIVYIGDLVQKSEQEMLRTPNFGRKSLNEIKEVLTGMGLSLGMSVPAWPPENIEDLAKRLDETF</sequence>
<dbReference type="EC" id="2.7.7.6" evidence="1"/>
<dbReference type="EMBL" id="CP000009">
    <property type="protein sequence ID" value="AAW60139.1"/>
    <property type="molecule type" value="Genomic_DNA"/>
</dbReference>
<dbReference type="RefSeq" id="WP_011251942.1">
    <property type="nucleotide sequence ID" value="NZ_LT900338.1"/>
</dbReference>
<dbReference type="SMR" id="Q5FU07"/>
<dbReference type="STRING" id="290633.GOX0356"/>
<dbReference type="KEGG" id="gox:GOX0356"/>
<dbReference type="eggNOG" id="COG0202">
    <property type="taxonomic scope" value="Bacteria"/>
</dbReference>
<dbReference type="HOGENOM" id="CLU_053084_0_0_5"/>
<dbReference type="Proteomes" id="UP000006375">
    <property type="component" value="Chromosome"/>
</dbReference>
<dbReference type="GO" id="GO:0005737">
    <property type="term" value="C:cytoplasm"/>
    <property type="evidence" value="ECO:0007669"/>
    <property type="project" value="UniProtKB-ARBA"/>
</dbReference>
<dbReference type="GO" id="GO:0000428">
    <property type="term" value="C:DNA-directed RNA polymerase complex"/>
    <property type="evidence" value="ECO:0007669"/>
    <property type="project" value="UniProtKB-KW"/>
</dbReference>
<dbReference type="GO" id="GO:0003677">
    <property type="term" value="F:DNA binding"/>
    <property type="evidence" value="ECO:0007669"/>
    <property type="project" value="UniProtKB-UniRule"/>
</dbReference>
<dbReference type="GO" id="GO:0003899">
    <property type="term" value="F:DNA-directed RNA polymerase activity"/>
    <property type="evidence" value="ECO:0007669"/>
    <property type="project" value="UniProtKB-UniRule"/>
</dbReference>
<dbReference type="GO" id="GO:0046983">
    <property type="term" value="F:protein dimerization activity"/>
    <property type="evidence" value="ECO:0007669"/>
    <property type="project" value="InterPro"/>
</dbReference>
<dbReference type="GO" id="GO:0006351">
    <property type="term" value="P:DNA-templated transcription"/>
    <property type="evidence" value="ECO:0007669"/>
    <property type="project" value="UniProtKB-UniRule"/>
</dbReference>
<dbReference type="CDD" id="cd06928">
    <property type="entry name" value="RNAP_alpha_NTD"/>
    <property type="match status" value="1"/>
</dbReference>
<dbReference type="FunFam" id="1.10.150.20:FF:000001">
    <property type="entry name" value="DNA-directed RNA polymerase subunit alpha"/>
    <property type="match status" value="1"/>
</dbReference>
<dbReference type="FunFam" id="2.170.120.12:FF:000001">
    <property type="entry name" value="DNA-directed RNA polymerase subunit alpha"/>
    <property type="match status" value="1"/>
</dbReference>
<dbReference type="Gene3D" id="1.10.150.20">
    <property type="entry name" value="5' to 3' exonuclease, C-terminal subdomain"/>
    <property type="match status" value="1"/>
</dbReference>
<dbReference type="Gene3D" id="2.170.120.12">
    <property type="entry name" value="DNA-directed RNA polymerase, insert domain"/>
    <property type="match status" value="1"/>
</dbReference>
<dbReference type="Gene3D" id="3.30.1360.10">
    <property type="entry name" value="RNA polymerase, RBP11-like subunit"/>
    <property type="match status" value="1"/>
</dbReference>
<dbReference type="HAMAP" id="MF_00059">
    <property type="entry name" value="RNApol_bact_RpoA"/>
    <property type="match status" value="1"/>
</dbReference>
<dbReference type="InterPro" id="IPR011262">
    <property type="entry name" value="DNA-dir_RNA_pol_insert"/>
</dbReference>
<dbReference type="InterPro" id="IPR011263">
    <property type="entry name" value="DNA-dir_RNA_pol_RpoA/D/Rpb3"/>
</dbReference>
<dbReference type="InterPro" id="IPR011773">
    <property type="entry name" value="DNA-dir_RpoA"/>
</dbReference>
<dbReference type="InterPro" id="IPR036603">
    <property type="entry name" value="RBP11-like"/>
</dbReference>
<dbReference type="InterPro" id="IPR011260">
    <property type="entry name" value="RNAP_asu_C"/>
</dbReference>
<dbReference type="InterPro" id="IPR036643">
    <property type="entry name" value="RNApol_insert_sf"/>
</dbReference>
<dbReference type="NCBIfam" id="NF003513">
    <property type="entry name" value="PRK05182.1-2"/>
    <property type="match status" value="1"/>
</dbReference>
<dbReference type="NCBIfam" id="NF003519">
    <property type="entry name" value="PRK05182.2-5"/>
    <property type="match status" value="1"/>
</dbReference>
<dbReference type="NCBIfam" id="TIGR02027">
    <property type="entry name" value="rpoA"/>
    <property type="match status" value="1"/>
</dbReference>
<dbReference type="Pfam" id="PF01000">
    <property type="entry name" value="RNA_pol_A_bac"/>
    <property type="match status" value="1"/>
</dbReference>
<dbReference type="Pfam" id="PF03118">
    <property type="entry name" value="RNA_pol_A_CTD"/>
    <property type="match status" value="1"/>
</dbReference>
<dbReference type="Pfam" id="PF01193">
    <property type="entry name" value="RNA_pol_L"/>
    <property type="match status" value="1"/>
</dbReference>
<dbReference type="SMART" id="SM00662">
    <property type="entry name" value="RPOLD"/>
    <property type="match status" value="1"/>
</dbReference>
<dbReference type="SUPFAM" id="SSF47789">
    <property type="entry name" value="C-terminal domain of RNA polymerase alpha subunit"/>
    <property type="match status" value="1"/>
</dbReference>
<dbReference type="SUPFAM" id="SSF56553">
    <property type="entry name" value="Insert subdomain of RNA polymerase alpha subunit"/>
    <property type="match status" value="1"/>
</dbReference>
<dbReference type="SUPFAM" id="SSF55257">
    <property type="entry name" value="RBP11-like subunits of RNA polymerase"/>
    <property type="match status" value="1"/>
</dbReference>
<reference key="1">
    <citation type="journal article" date="2005" name="Nat. Biotechnol.">
        <title>Complete genome sequence of the acetic acid bacterium Gluconobacter oxydans.</title>
        <authorList>
            <person name="Prust C."/>
            <person name="Hoffmeister M."/>
            <person name="Liesegang H."/>
            <person name="Wiezer A."/>
            <person name="Fricke W.F."/>
            <person name="Ehrenreich A."/>
            <person name="Gottschalk G."/>
            <person name="Deppenmeier U."/>
        </authorList>
    </citation>
    <scope>NUCLEOTIDE SEQUENCE [LARGE SCALE GENOMIC DNA]</scope>
    <source>
        <strain>621H</strain>
    </source>
</reference>
<organism>
    <name type="scientific">Gluconobacter oxydans (strain 621H)</name>
    <name type="common">Gluconobacter suboxydans</name>
    <dbReference type="NCBI Taxonomy" id="290633"/>
    <lineage>
        <taxon>Bacteria</taxon>
        <taxon>Pseudomonadati</taxon>
        <taxon>Pseudomonadota</taxon>
        <taxon>Alphaproteobacteria</taxon>
        <taxon>Acetobacterales</taxon>
        <taxon>Acetobacteraceae</taxon>
        <taxon>Gluconobacter</taxon>
    </lineage>
</organism>
<accession>Q5FU07</accession>
<evidence type="ECO:0000255" key="1">
    <source>
        <dbReference type="HAMAP-Rule" id="MF_00059"/>
    </source>
</evidence>